<protein>
    <recommendedName>
        <fullName>DNA polymerase alpha catalytic subunit</fullName>
        <ecNumber>2.7.7.7</ecNumber>
    </recommendedName>
</protein>
<name>DPOLA_STENO</name>
<dbReference type="EC" id="2.7.7.7"/>
<dbReference type="EMBL" id="U02001">
    <property type="protein sequence ID" value="AAA21587.1"/>
    <property type="molecule type" value="Genomic_DNA"/>
</dbReference>
<dbReference type="PIR" id="T18560">
    <property type="entry name" value="T18560"/>
</dbReference>
<dbReference type="SMR" id="Q94636"/>
<dbReference type="GO" id="GO:0005658">
    <property type="term" value="C:alpha DNA polymerase:primase complex"/>
    <property type="evidence" value="ECO:0007669"/>
    <property type="project" value="TreeGrafter"/>
</dbReference>
<dbReference type="GO" id="GO:0003682">
    <property type="term" value="F:chromatin binding"/>
    <property type="evidence" value="ECO:0007669"/>
    <property type="project" value="TreeGrafter"/>
</dbReference>
<dbReference type="GO" id="GO:0003688">
    <property type="term" value="F:DNA replication origin binding"/>
    <property type="evidence" value="ECO:0007669"/>
    <property type="project" value="TreeGrafter"/>
</dbReference>
<dbReference type="GO" id="GO:0003887">
    <property type="term" value="F:DNA-directed DNA polymerase activity"/>
    <property type="evidence" value="ECO:0007669"/>
    <property type="project" value="UniProtKB-KW"/>
</dbReference>
<dbReference type="GO" id="GO:0000166">
    <property type="term" value="F:nucleotide binding"/>
    <property type="evidence" value="ECO:0007669"/>
    <property type="project" value="InterPro"/>
</dbReference>
<dbReference type="GO" id="GO:0003697">
    <property type="term" value="F:single-stranded DNA binding"/>
    <property type="evidence" value="ECO:0007669"/>
    <property type="project" value="TreeGrafter"/>
</dbReference>
<dbReference type="GO" id="GO:0008270">
    <property type="term" value="F:zinc ion binding"/>
    <property type="evidence" value="ECO:0007669"/>
    <property type="project" value="UniProtKB-KW"/>
</dbReference>
<dbReference type="GO" id="GO:0006273">
    <property type="term" value="P:lagging strand elongation"/>
    <property type="evidence" value="ECO:0007669"/>
    <property type="project" value="TreeGrafter"/>
</dbReference>
<dbReference type="GO" id="GO:0006272">
    <property type="term" value="P:leading strand elongation"/>
    <property type="evidence" value="ECO:0007669"/>
    <property type="project" value="TreeGrafter"/>
</dbReference>
<dbReference type="GO" id="GO:1902975">
    <property type="term" value="P:mitotic DNA replication initiation"/>
    <property type="evidence" value="ECO:0007669"/>
    <property type="project" value="InterPro"/>
</dbReference>
<dbReference type="CDD" id="cd05776">
    <property type="entry name" value="DNA_polB_alpha_exo"/>
    <property type="match status" value="1"/>
</dbReference>
<dbReference type="CDD" id="cd05532">
    <property type="entry name" value="POLBc_alpha"/>
    <property type="match status" value="1"/>
</dbReference>
<dbReference type="FunFam" id="1.10.132.60:FF:000004">
    <property type="entry name" value="DNA polymerase"/>
    <property type="match status" value="1"/>
</dbReference>
<dbReference type="Gene3D" id="2.40.50.730">
    <property type="match status" value="1"/>
</dbReference>
<dbReference type="Gene3D" id="3.30.70.2820">
    <property type="match status" value="1"/>
</dbReference>
<dbReference type="Gene3D" id="6.10.10.100">
    <property type="match status" value="1"/>
</dbReference>
<dbReference type="Gene3D" id="1.10.3200.20">
    <property type="entry name" value="DNA Polymerase alpha, zinc finger"/>
    <property type="match status" value="1"/>
</dbReference>
<dbReference type="Gene3D" id="1.10.132.60">
    <property type="entry name" value="DNA polymerase family B, C-terminal domain"/>
    <property type="match status" value="1"/>
</dbReference>
<dbReference type="Gene3D" id="1.10.287.690">
    <property type="entry name" value="Helix hairpin bin"/>
    <property type="match status" value="1"/>
</dbReference>
<dbReference type="Gene3D" id="3.90.1600.10">
    <property type="entry name" value="Palm domain of DNA polymerase"/>
    <property type="match status" value="1"/>
</dbReference>
<dbReference type="Gene3D" id="3.30.420.10">
    <property type="entry name" value="Ribonuclease H-like superfamily/Ribonuclease H"/>
    <property type="match status" value="1"/>
</dbReference>
<dbReference type="InterPro" id="IPR006172">
    <property type="entry name" value="DNA-dir_DNA_pol_B"/>
</dbReference>
<dbReference type="InterPro" id="IPR017964">
    <property type="entry name" value="DNA-dir_DNA_pol_B_CS"/>
</dbReference>
<dbReference type="InterPro" id="IPR006133">
    <property type="entry name" value="DNA-dir_DNA_pol_B_exonuc"/>
</dbReference>
<dbReference type="InterPro" id="IPR006134">
    <property type="entry name" value="DNA-dir_DNA_pol_B_multi_dom"/>
</dbReference>
<dbReference type="InterPro" id="IPR043502">
    <property type="entry name" value="DNA/RNA_pol_sf"/>
</dbReference>
<dbReference type="InterPro" id="IPR024647">
    <property type="entry name" value="DNA_pol_a_cat_su_N"/>
</dbReference>
<dbReference type="InterPro" id="IPR042087">
    <property type="entry name" value="DNA_pol_B_thumb"/>
</dbReference>
<dbReference type="InterPro" id="IPR023211">
    <property type="entry name" value="DNA_pol_palm_dom_sf"/>
</dbReference>
<dbReference type="InterPro" id="IPR038256">
    <property type="entry name" value="Pol_alpha_znc_sf"/>
</dbReference>
<dbReference type="InterPro" id="IPR045846">
    <property type="entry name" value="POLBc_alpha"/>
</dbReference>
<dbReference type="InterPro" id="IPR012337">
    <property type="entry name" value="RNaseH-like_sf"/>
</dbReference>
<dbReference type="InterPro" id="IPR036397">
    <property type="entry name" value="RNaseH_sf"/>
</dbReference>
<dbReference type="InterPro" id="IPR015088">
    <property type="entry name" value="Znf_DNA-dir_DNA_pol_B_alpha"/>
</dbReference>
<dbReference type="NCBIfam" id="TIGR00592">
    <property type="entry name" value="pol2"/>
    <property type="match status" value="1"/>
</dbReference>
<dbReference type="PANTHER" id="PTHR45861">
    <property type="entry name" value="DNA POLYMERASE ALPHA CATALYTIC SUBUNIT"/>
    <property type="match status" value="1"/>
</dbReference>
<dbReference type="PANTHER" id="PTHR45861:SF1">
    <property type="entry name" value="DNA POLYMERASE ALPHA CATALYTIC SUBUNIT"/>
    <property type="match status" value="1"/>
</dbReference>
<dbReference type="Pfam" id="PF12254">
    <property type="entry name" value="DNA_pol_alpha_N"/>
    <property type="match status" value="1"/>
</dbReference>
<dbReference type="Pfam" id="PF00136">
    <property type="entry name" value="DNA_pol_B"/>
    <property type="match status" value="1"/>
</dbReference>
<dbReference type="Pfam" id="PF03104">
    <property type="entry name" value="DNA_pol_B_exo1"/>
    <property type="match status" value="1"/>
</dbReference>
<dbReference type="Pfam" id="PF08996">
    <property type="entry name" value="zf-DNA_Pol"/>
    <property type="match status" value="1"/>
</dbReference>
<dbReference type="PRINTS" id="PR00106">
    <property type="entry name" value="DNAPOLB"/>
</dbReference>
<dbReference type="SMART" id="SM00486">
    <property type="entry name" value="POLBc"/>
    <property type="match status" value="1"/>
</dbReference>
<dbReference type="SUPFAM" id="SSF56672">
    <property type="entry name" value="DNA/RNA polymerases"/>
    <property type="match status" value="1"/>
</dbReference>
<dbReference type="SUPFAM" id="SSF53098">
    <property type="entry name" value="Ribonuclease H-like"/>
    <property type="match status" value="1"/>
</dbReference>
<dbReference type="PROSITE" id="PS00116">
    <property type="entry name" value="DNA_POLYMERASE_B"/>
    <property type="match status" value="1"/>
</dbReference>
<reference key="1">
    <citation type="journal article" date="1994" name="Gene">
        <title>A gene-sized DNA molecule encoding the catalytic subunit of DNA polymerase alpha in the macronucleus of Oxytricha nova.</title>
        <authorList>
            <person name="Mansour S.J."/>
            <person name="Hoffman D.C."/>
            <person name="Prescott D.M."/>
        </authorList>
    </citation>
    <scope>NUCLEOTIDE SEQUENCE [GENOMIC DNA]</scope>
</reference>
<accession>Q94636</accession>
<evidence type="ECO:0000250" key="1">
    <source>
        <dbReference type="UniProtKB" id="P13382"/>
    </source>
</evidence>
<evidence type="ECO:0000256" key="2">
    <source>
        <dbReference type="SAM" id="MobiDB-lite"/>
    </source>
</evidence>
<evidence type="ECO:0000305" key="3"/>
<proteinExistence type="inferred from homology"/>
<keyword id="KW-0235">DNA replication</keyword>
<keyword id="KW-0238">DNA-binding</keyword>
<keyword id="KW-0239">DNA-directed DNA polymerase</keyword>
<keyword id="KW-0479">Metal-binding</keyword>
<keyword id="KW-0548">Nucleotidyltransferase</keyword>
<keyword id="KW-0539">Nucleus</keyword>
<keyword id="KW-0808">Transferase</keyword>
<keyword id="KW-0862">Zinc</keyword>
<keyword id="KW-0863">Zinc-finger</keyword>
<comment type="function">
    <text>Polymerase alpha in a complex with DNA primase is a replicative polymerase.</text>
</comment>
<comment type="catalytic activity">
    <reaction>
        <text>DNA(n) + a 2'-deoxyribonucleoside 5'-triphosphate = DNA(n+1) + diphosphate</text>
        <dbReference type="Rhea" id="RHEA:22508"/>
        <dbReference type="Rhea" id="RHEA-COMP:17339"/>
        <dbReference type="Rhea" id="RHEA-COMP:17340"/>
        <dbReference type="ChEBI" id="CHEBI:33019"/>
        <dbReference type="ChEBI" id="CHEBI:61560"/>
        <dbReference type="ChEBI" id="CHEBI:173112"/>
        <dbReference type="EC" id="2.7.7.7"/>
    </reaction>
</comment>
<comment type="subcellular location">
    <subcellularLocation>
        <location>Nucleus</location>
    </subcellularLocation>
</comment>
<comment type="miscellaneous">
    <text>In eukaryotes there are five DNA polymerases: alpha, beta, gamma, delta, and epsilon which are responsible for different reactions of DNA synthesis.</text>
</comment>
<comment type="similarity">
    <text evidence="3">Belongs to the DNA polymerase type-B family.</text>
</comment>
<feature type="chain" id="PRO_0000046434" description="DNA polymerase alpha catalytic subunit">
    <location>
        <begin position="1"/>
        <end position="1492"/>
    </location>
</feature>
<feature type="zinc finger region" description="CysA-type">
    <location>
        <begin position="1314"/>
        <end position="1344"/>
    </location>
</feature>
<feature type="region of interest" description="Disordered" evidence="2">
    <location>
        <begin position="34"/>
        <end position="112"/>
    </location>
</feature>
<feature type="region of interest" description="Disordered" evidence="2">
    <location>
        <begin position="162"/>
        <end position="195"/>
    </location>
</feature>
<feature type="region of interest" description="Disordered" evidence="2">
    <location>
        <begin position="210"/>
        <end position="234"/>
    </location>
</feature>
<feature type="short sequence motif" description="CysB motif">
    <location>
        <begin position="1375"/>
        <end position="1398"/>
    </location>
</feature>
<feature type="compositionally biased region" description="Basic and acidic residues" evidence="2">
    <location>
        <begin position="42"/>
        <end position="55"/>
    </location>
</feature>
<feature type="compositionally biased region" description="Polar residues" evidence="2">
    <location>
        <begin position="93"/>
        <end position="105"/>
    </location>
</feature>
<feature type="compositionally biased region" description="Basic and acidic residues" evidence="2">
    <location>
        <begin position="166"/>
        <end position="178"/>
    </location>
</feature>
<feature type="compositionally biased region" description="Polar residues" evidence="2">
    <location>
        <begin position="184"/>
        <end position="194"/>
    </location>
</feature>
<feature type="compositionally biased region" description="Polar residues" evidence="2">
    <location>
        <begin position="210"/>
        <end position="224"/>
    </location>
</feature>
<feature type="binding site" evidence="1">
    <location>
        <position position="1314"/>
    </location>
    <ligand>
        <name>Zn(2+)</name>
        <dbReference type="ChEBI" id="CHEBI:29105"/>
        <label>1</label>
    </ligand>
</feature>
<feature type="binding site" evidence="1">
    <location>
        <position position="1317"/>
    </location>
    <ligand>
        <name>Zn(2+)</name>
        <dbReference type="ChEBI" id="CHEBI:29105"/>
        <label>1</label>
    </ligand>
</feature>
<feature type="binding site" evidence="1">
    <location>
        <position position="1341"/>
    </location>
    <ligand>
        <name>Zn(2+)</name>
        <dbReference type="ChEBI" id="CHEBI:29105"/>
        <label>1</label>
    </ligand>
</feature>
<feature type="binding site" evidence="1">
    <location>
        <position position="1344"/>
    </location>
    <ligand>
        <name>Zn(2+)</name>
        <dbReference type="ChEBI" id="CHEBI:29105"/>
        <label>1</label>
    </ligand>
</feature>
<feature type="binding site" evidence="1">
    <location>
        <position position="1375"/>
    </location>
    <ligand>
        <name>Zn(2+)</name>
        <dbReference type="ChEBI" id="CHEBI:29105"/>
        <label>2</label>
    </ligand>
</feature>
<feature type="binding site" evidence="1">
    <location>
        <position position="1380"/>
    </location>
    <ligand>
        <name>Zn(2+)</name>
        <dbReference type="ChEBI" id="CHEBI:29105"/>
        <label>2</label>
    </ligand>
</feature>
<feature type="binding site" evidence="1">
    <location>
        <position position="1393"/>
    </location>
    <ligand>
        <name>Zn(2+)</name>
        <dbReference type="ChEBI" id="CHEBI:29105"/>
        <label>2</label>
    </ligand>
</feature>
<feature type="binding site" evidence="1">
    <location>
        <position position="1398"/>
    </location>
    <ligand>
        <name>Zn(2+)</name>
        <dbReference type="ChEBI" id="CHEBI:29105"/>
        <label>2</label>
    </ligand>
</feature>
<organism>
    <name type="scientific">Sterkiella nova</name>
    <name type="common">Ciliate</name>
    <name type="synonym">Oxytricha nova</name>
    <dbReference type="NCBI Taxonomy" id="200597"/>
    <lineage>
        <taxon>Eukaryota</taxon>
        <taxon>Sar</taxon>
        <taxon>Alveolata</taxon>
        <taxon>Ciliophora</taxon>
        <taxon>Intramacronucleata</taxon>
        <taxon>Spirotrichea</taxon>
        <taxon>Stichotrichia</taxon>
        <taxon>Sporadotrichida</taxon>
        <taxon>Oxytrichidae</taxon>
        <taxon>Stylonychinae</taxon>
        <taxon>Sterkiella</taxon>
    </lineage>
</organism>
<sequence>MIKHILQVEETKKIFEEIDDNEYEKIQDSRKNDDFIVDDDGYGYRDHGGEIWDRDGDVEEVGKKKKKKQNNHDPNENIMNYMMPASTLKKKSNAASTNPSAQQKPKVSVEQSRDIMNNLFQQLDAKDVDELEDVNEAKNMFVQEMNRPVAFNKEEDFNNRYSVTLESREEQERRRQSEQLKQQANIGQNQSDVNPFSKKRKLDEFQQVQANSYQSKQNSHSVSKSKPGDHEMANHADGVDLNLLAIDDTKMTDSHPSEIITQNQRASAVSSVNQQIMESTNGKNQLEKNDTEWQQMKEKNAVFNQDLRMNDNALMSNQQDYPLPLNEDGTLSFYWIDAHEENNGADLFVFGKIYQHEERKFVSCSIKVNGMQRELFVLPKMSGKSRAAMTTEEEKEQARKVMMELEGVRKRFPAITKWRCKPVTRKYAFELPIQHGEHQFVKIKYDATFPSLPSTVQGNTFECIFGANQSMLESFILKRKIRGPCWMTIRNPQKVTDFRRTWCKQEILVSNPKDIEITLDDLNKTELPPLTSVTFAIKTCRSSQNTNEIAMLSCIVNENISQEGPSKIDVHKSFTLLRKLDGKPMPIEYERAFRDKKDSFIQFFQHERQLIEAFVAKIYQLDPDLMVAHNLCGGMFDLLLARIQMLKISHWSRIGRLKKNQIPNKKSDQSGANYGGSQWIPRQVTCGRLLVDTFLTAKELIRETNYDLTHLAKVQLQKDRIDFDDDLLPTFYVQMAKLFQLIDHTEKDAYLTLQLMNHLQVIPLTKQLTNIAGNLWFRSLQNARAERNEMLLLHEFKKKKFVLPDKKQLNAKDLKKNMFADEYEEGDGKTKGGKRKKAAYAGGLVIEPKAGFYDNIILLLDFNSLYPSIIQEYNLCFTTVNRRPTKNFDGSEMKNQYKKGENGEEEVDIEEADLPDKNVNLKDAVLPMVLRDLVQKRKAVKDKMKTEKDHVKLSQLEIRQKAIKLTANSMYGCLGFGSSRFHAQAIAALITRTGRETLLRTKDIAENKLGFNVVYGDTDSIMINTGSNQLQQALEMGKRLKGEVNCLYKCLEIEIDGVFKSLLLLKKKKYAALKYENFLSPAEVKVVQEMKGLDMVRRDWCPLSKRVGRYVLDQILSGKQREEVVLNLNEFLSNIGNELKEGTIKLNEFIITKQITKAISDYNDIKGQPHVAVAKRLRDQGKSENQLVNNFIPYVICQQTYGDTTKSSTALSDKAYHPDEVISSRGKVTIDSDWYVSTQLLPPITRLIEHIEGIEVEFVAQCLGLDPKKYRYHSEKKNTDNPTDDPLIVSNPVLQTETERSLKNRTVAELNIKCPHCAHNYHFPGILVPSSNNTELTGLACVKCNQRIPDAYMLNRLNLFLKQLTALYYLGMKECKEPQCGMKTNQLLLNNKCIVKGCKGKMNSEYSELRINDTLRYLEGLFNVKKFLIENEKYRKKYEKPELVPNFQSFKELQKKVESFMIRSGYNKVDLGNIFGFMSKGANPHQQKMSIF</sequence>